<name>MAP1B_MOUSE</name>
<proteinExistence type="evidence at protein level"/>
<organism>
    <name type="scientific">Mus musculus</name>
    <name type="common">Mouse</name>
    <dbReference type="NCBI Taxonomy" id="10090"/>
    <lineage>
        <taxon>Eukaryota</taxon>
        <taxon>Metazoa</taxon>
        <taxon>Chordata</taxon>
        <taxon>Craniata</taxon>
        <taxon>Vertebrata</taxon>
        <taxon>Euteleostomi</taxon>
        <taxon>Mammalia</taxon>
        <taxon>Eutheria</taxon>
        <taxon>Euarchontoglires</taxon>
        <taxon>Glires</taxon>
        <taxon>Rodentia</taxon>
        <taxon>Myomorpha</taxon>
        <taxon>Muroidea</taxon>
        <taxon>Muridae</taxon>
        <taxon>Murinae</taxon>
        <taxon>Mus</taxon>
        <taxon>Mus</taxon>
    </lineage>
</organism>
<accession>P14873</accession>
<accession>E9QM11</accession>
<gene>
    <name type="primary">Map1b</name>
    <name type="synonym">Mtap1b</name>
    <name type="synonym">Mtap5</name>
</gene>
<evidence type="ECO:0000250" key="1"/>
<evidence type="ECO:0000250" key="2">
    <source>
        <dbReference type="UniProtKB" id="P15205"/>
    </source>
</evidence>
<evidence type="ECO:0000250" key="3">
    <source>
        <dbReference type="UniProtKB" id="P46821"/>
    </source>
</evidence>
<evidence type="ECO:0000256" key="4">
    <source>
        <dbReference type="SAM" id="MobiDB-lite"/>
    </source>
</evidence>
<evidence type="ECO:0000269" key="5">
    <source>
    </source>
</evidence>
<evidence type="ECO:0000269" key="6">
    <source>
    </source>
</evidence>
<evidence type="ECO:0000269" key="7">
    <source>
    </source>
</evidence>
<evidence type="ECO:0000269" key="8">
    <source>
    </source>
</evidence>
<evidence type="ECO:0000269" key="9">
    <source>
    </source>
</evidence>
<evidence type="ECO:0000269" key="10">
    <source>
    </source>
</evidence>
<evidence type="ECO:0000269" key="11">
    <source>
    </source>
</evidence>
<evidence type="ECO:0000269" key="12">
    <source>
    </source>
</evidence>
<evidence type="ECO:0000269" key="13">
    <source>
    </source>
</evidence>
<evidence type="ECO:0000305" key="14"/>
<evidence type="ECO:0000305" key="15">
    <source>
    </source>
</evidence>
<evidence type="ECO:0007744" key="16">
    <source>
    </source>
</evidence>
<evidence type="ECO:0007744" key="17">
    <source>
    </source>
</evidence>
<evidence type="ECO:0007744" key="18">
    <source>
    </source>
</evidence>
<evidence type="ECO:0007744" key="19">
    <source>
    </source>
</evidence>
<evidence type="ECO:0007744" key="20">
    <source>
    </source>
</evidence>
<sequence length="2464" mass="270255">MATVVVEATEPEPSGSIGNPAASTSPSLSHRFLDSKFYLLVVVGETVTEEHLRRAIGNIELGIRSWDTNLIECNLDQELKLFVSRHSARFSPEVPGQKILHHRSDVLETVVLINPSDEAVSTEVRLMITDAARHKLLVLTGQCFENTGELILQSGSFSFQNFIEIFTDQEIGELLSTTHPANKASLTLFCPEEGDWKNSNLDRHNLQDFINIKLNSASILPEMEGLSEFTEYLSESVEVPSPFDILEPPTSGGFLKLSKPCCYIFPGGRGDSALFAVNGFNMLINGGSERKSCFWKLIRHLDRVDSILLTHIGDDNLPGINSMLQRKIAELEEERSQGSTSNSDWMKNLISPDLGVVFLNVPENLKDPEPNIKMKRSIEEACFTLQYLNKLSMKPEPLFRSVGNTIEPVILFQKMGVGKLEMYVLNPVKSSKEMQYFMQQWTGTNKDKAELILPNGQEVDIPISYLTSVSSLIVWHPANPAEKIIRVLFPGNSTQYNILEGLEKLKHLDFLKQPLATQKDLTGQVPTPPVKQVKLKQRADSRESLKPATKPVASKSVRKESKEETPEVTKTSQVEKTPKVESKEKVLVKKDKPVKTESKPSVTEKEVSSKEEQSPVKAEVAEKQATESKPKVTKDKVVKKEIKTKLEEKKEEKPKKEVVKKEDKTPLKKDEKPRKEEVKKEIKKEIKKEERKELKKEVKKETPLKDAKKEVKKEEKKEVKKEEKEPKKEIKKISKDIKKSTPLSDTKKPSALKPKVAKKEESTKKEPLAAGKLKDKGKVKVIKKEGKTTEAAATAVGTAATTAAVVAAAGIAASGPVKELEAERSLMSSPEDLTKDFEELKAEEIDVAKDIKPQLELIEDEEKLKETQPGEAYVIQKETEVSKGSAESPDEGITTTEGEGECEQTPEELEPVEKQGVDDIEKFEDEGAGFEESSETGDYEEKAETEEAEEPEEDGEDNASGSASKHSPTEDDESAKAEADVHLKEKRESVVSGDDRAEEDMDDVLEKGEAEQSEEEGEEEDKAEDAREEGYEPDKTEAEDYVMAVADKAAEAGVTEEQYGYLGTSAKQPGIQSPSREPASSIHDETLPGGSESEATASDEENREDQPEEFTATSGYTQSTIEISSEPTPMDEMSTPRDVMSDETNNEETESPSQEFVNITKYESSLYSQEYSKPAVASFNGLSEGSKTDATDGKDYNASASTISPPSSMEEDKFSKSALRDAYCSEEKELKASAELDIKDVSDERLSPAKSPSLSPSPPSPIEKTPLGERSVNFSLTPNEIKVSAEGEARSVSPGVTQAVVEEHCASPEEKTLEVVSPSQSVTGSAGHTPYYQSPTDEKSSHLPTEVTEKPQAVPVSFEFSEAKDENERASLSPMDEPVPDSESPVEKVLSPLRSPPLLGSESPYEDFLSADSKVLGRRSESPFEGKNGKQGFPDRESPVSDLTSTGLYQDKQEEKSTGFIPIKEDFGPEKKTSDVETMSSQSALALDERKLGGDVSPTQIDVSQFGSFKEDTKMSISEGTVSDKSATPVDEGVAEDTYSHMEGVASVSTASVATSSFPEPTTDDVSPSLHAEVGSPHSTEVDDSLSVSVVQTPTTFQETEMSPSKEECPRPMSISPPDFSPKTAKSRTPVQDHRSEQSSMSIEFGQESPEHSLAMDFSRQSPDHPTLGASVLHITENGPTEVDYSPSDIQDSSLSHKIPPTEEPSYTQDNDLSELISVSQVEASPSTSSAHTPSQIASPLQEDTLSDVVPPREMSLYASLASEKVQSLEGEKLSPKSDISPLTPRESSPLYSPGFSDSTSAAKETAAAHQASSSPPIDAATAEPYGFRSSMLFDTMQHHLALNRDLTTSSVEKDSGGKTPGDFNYAYQKPENAAGSPDEEDYDYESQEKTIRTHDVGGYYYEKTERTIKSPCDSGYSYETIEKTIKTPEDGGYTCEITEKTTRTPEEGGYSYEISEKTTRTPEVSGYTYEKTERSRRLLDDISNGYDDTEDGGHTLGDCSYSYETTEKITSFPESESYSYETSTKTTRSPDTSAYCYETMEKITKTPQASTYSYETSDRCYTTEKKSPSEARQDVDLCLVSSCEFKHPKTELSPSFINPNPLEWFAGEEPTEESEKPLTQSGGAPPPSGGKQQGRQCDETPPTSVSESAPSQTDSDVPPETEECPSITADANIDSEDESETIPTDKTVTYKHMDPPPAPMQDRSPSPRHPDVSMVDPDALAVDQNLGKALKKDLKEKTKTKKPGTKTKSSSPVKKGDGKSKPLAASPKPGALKESSDKVSRVASPKKKESVEKATKTTTTPEVKATRGEEKDKETKNAANASASKSAKTATAGPGTTKTAKSSTVPPGLPVYLDLCYIPNHSNSKNVDVEFFKRVRSSYYVVSGNDPAAEEPSRAVLDALLEGKAQWGSNMQVTLIPTHDSEVMREWYQETHEKQQDLNIMVLASSSTVVMQDESFPACKIEL</sequence>
<reference key="1">
    <citation type="journal article" date="1989" name="J. Cell Biol.">
        <title>The microtubule binding domain of microtubule-associated protein MAP1B contains a repeated sequence motif unrelated to that of MAP2 and tau.</title>
        <authorList>
            <person name="Noble M."/>
            <person name="Lewis S.A."/>
            <person name="Cowan N.J."/>
        </authorList>
    </citation>
    <scope>NUCLEOTIDE SEQUENCE [MRNA]</scope>
    <scope>DOMAIN</scope>
    <source>
        <strain>Swiss Webster</strain>
        <tissue>Brain</tissue>
    </source>
</reference>
<reference key="2">
    <citation type="journal article" date="2009" name="PLoS Biol.">
        <title>Lineage-specific biology revealed by a finished genome assembly of the mouse.</title>
        <authorList>
            <person name="Church D.M."/>
            <person name="Goodstadt L."/>
            <person name="Hillier L.W."/>
            <person name="Zody M.C."/>
            <person name="Goldstein S."/>
            <person name="She X."/>
            <person name="Bult C.J."/>
            <person name="Agarwala R."/>
            <person name="Cherry J.L."/>
            <person name="DiCuccio M."/>
            <person name="Hlavina W."/>
            <person name="Kapustin Y."/>
            <person name="Meric P."/>
            <person name="Maglott D."/>
            <person name="Birtle Z."/>
            <person name="Marques A.C."/>
            <person name="Graves T."/>
            <person name="Zhou S."/>
            <person name="Teague B."/>
            <person name="Potamousis K."/>
            <person name="Churas C."/>
            <person name="Place M."/>
            <person name="Herschleb J."/>
            <person name="Runnheim R."/>
            <person name="Forrest D."/>
            <person name="Amos-Landgraf J."/>
            <person name="Schwartz D.C."/>
            <person name="Cheng Z."/>
            <person name="Lindblad-Toh K."/>
            <person name="Eichler E.E."/>
            <person name="Ponting C.P."/>
        </authorList>
    </citation>
    <scope>NUCLEOTIDE SEQUENCE [LARGE SCALE GENOMIC DNA]</scope>
    <source>
        <strain>C57BL/6J</strain>
    </source>
</reference>
<reference key="3">
    <citation type="journal article" date="2002" name="J. Cell Biol.">
        <title>Microtubule-associated protein 1B: a neuronal binding partner for gigaxonin.</title>
        <authorList>
            <person name="Ding J."/>
            <person name="Liu J.-J."/>
            <person name="Kowal A.S."/>
            <person name="Nardine T."/>
            <person name="Bhattacharya P."/>
            <person name="Lee A."/>
            <person name="Yang Y."/>
        </authorList>
    </citation>
    <scope>INTERACTION WITH GAN</scope>
</reference>
<reference key="4">
    <citation type="journal article" date="2003" name="J. Biol. Chem.">
        <title>Mapmodulin/leucine-rich acidic nuclear protein binds the light chain of microtubule-associated protein 1B and modulates neuritogenesis.</title>
        <authorList>
            <person name="Opal P."/>
            <person name="Garcia J.J."/>
            <person name="Propst F."/>
            <person name="Matilla A."/>
            <person name="Orr H.T."/>
            <person name="Zoghbi H.Y."/>
        </authorList>
    </citation>
    <scope>INTERACTION WITH ANP32A</scope>
</reference>
<reference key="5">
    <citation type="journal article" date="2004" name="Mol. Cell. Proteomics">
        <title>Phosphoproteomic analysis of the developing mouse brain.</title>
        <authorList>
            <person name="Ballif B.A."/>
            <person name="Villen J."/>
            <person name="Beausoleil S.A."/>
            <person name="Schwartz D."/>
            <person name="Gygi S.P."/>
        </authorList>
    </citation>
    <scope>PHOSPHORYLATION [LARGE SCALE ANALYSIS] AT SER-1260; SER-1391 AND SER-1395</scope>
    <scope>IDENTIFICATION BY MASS SPECTROMETRY [LARGE SCALE ANALYSIS]</scope>
    <source>
        <tissue>Embryonic brain</tissue>
    </source>
</reference>
<reference key="6">
    <citation type="journal article" date="2006" name="Mol. Cell. Proteomics">
        <title>Comprehensive identification of phosphorylation sites in postsynaptic density preparations.</title>
        <authorList>
            <person name="Trinidad J.C."/>
            <person name="Specht C.G."/>
            <person name="Thalhammer A."/>
            <person name="Schoepfer R."/>
            <person name="Burlingame A.L."/>
        </authorList>
    </citation>
    <scope>PHOSPHORYLATION [LARGE SCALE ANALYSIS] AT SER-541; SER-544; SER-561; SER-989; SER-1013; SER-1307; SER-1438; SER-1775 AND SER-1911</scope>
    <scope>IDENTIFICATION BY MASS SPECTROMETRY [LARGE SCALE ANALYSIS]</scope>
    <source>
        <tissue>Brain</tissue>
    </source>
</reference>
<reference key="7">
    <citation type="journal article" date="2007" name="Biochem. Biophys. Res. Commun.">
        <title>Rho-kinase modulates the function of STEF, a Rac GEF, through its phosphorylation.</title>
        <authorList>
            <person name="Takefuji M."/>
            <person name="Mori K."/>
            <person name="Morita Y."/>
            <person name="Arimura N."/>
            <person name="Nishimura T."/>
            <person name="Nakayama M."/>
            <person name="Hoshino M."/>
            <person name="Iwamatsu A."/>
            <person name="Murohara T."/>
            <person name="Kaibuchi K."/>
            <person name="Amano M."/>
        </authorList>
    </citation>
    <scope>INTERACTION WITH TIAM2</scope>
</reference>
<reference key="8">
    <citation type="journal article" date="2007" name="Mol. Cell. Proteomics">
        <title>Qualitative and quantitative analyses of protein phosphorylation in naive and stimulated mouse synaptosomal preparations.</title>
        <authorList>
            <person name="Munton R.P."/>
            <person name="Tweedie-Cullen R."/>
            <person name="Livingstone-Zatchej M."/>
            <person name="Weinandy F."/>
            <person name="Waidelich M."/>
            <person name="Longo D."/>
            <person name="Gehrig P."/>
            <person name="Potthast F."/>
            <person name="Rutishauser D."/>
            <person name="Gerrits B."/>
            <person name="Panse C."/>
            <person name="Schlapbach R."/>
            <person name="Mansuy I.M."/>
        </authorList>
    </citation>
    <scope>IDENTIFICATION BY MASS SPECTROMETRY [LARGE SCALE ANALYSIS]</scope>
    <source>
        <tissue>Brain cortex</tissue>
    </source>
</reference>
<reference key="9">
    <citation type="journal article" date="2007" name="Nat. Cell Biol.">
        <title>S-nitrosylation of microtubule-associated protein 1B mediates nitric-oxide-induced axon retraction.</title>
        <authorList>
            <person name="Stroissnigg H."/>
            <person name="Trancikova A."/>
            <person name="Descovich L."/>
            <person name="Fuhrmann J."/>
            <person name="Kutschera W."/>
            <person name="Kostan J."/>
            <person name="Meixner A."/>
            <person name="Nothias F."/>
            <person name="Propst F."/>
        </authorList>
    </citation>
    <scope>S-NITROSYLATION AT CYS-2460</scope>
</reference>
<reference key="10">
    <citation type="journal article" date="2008" name="Dev. Neurosci.">
        <title>Microtubule-associated protein 1B interaction with tubulin tyrosine ligase contributes to the control of microtubule tyrosination.</title>
        <authorList>
            <person name="Utreras E."/>
            <person name="Jimenez-Mateos E.M."/>
            <person name="Contreras-Vallejos E."/>
            <person name="Tortosa E."/>
            <person name="Perez M."/>
            <person name="Rojas S."/>
            <person name="Saragoni L."/>
            <person name="Maccioni R.B."/>
            <person name="Avila J."/>
            <person name="Gonzalez-Billault C."/>
        </authorList>
    </citation>
    <scope>FUNCTION IN REGULATION OF ALPHA-TUBULIN TYROSINATION</scope>
    <scope>INTERACTION WITH TTL</scope>
</reference>
<reference key="11">
    <citation type="journal article" date="2009" name="Mol. Cell. Proteomics">
        <title>Large scale localization of protein phosphorylation by use of electron capture dissociation mass spectrometry.</title>
        <authorList>
            <person name="Sweet S.M."/>
            <person name="Bailey C.M."/>
            <person name="Cunningham D.L."/>
            <person name="Heath J.K."/>
            <person name="Cooper H.J."/>
        </authorList>
    </citation>
    <scope>PHOSPHORYLATION [LARGE SCALE ANALYSIS] AT SER-614; SER-1438; SER-1497 AND SER-1775</scope>
    <scope>IDENTIFICATION BY MASS SPECTROMETRY [LARGE SCALE ANALYSIS]</scope>
    <source>
        <tissue>Embryonic fibroblast</tissue>
    </source>
</reference>
<reference key="12">
    <citation type="journal article" date="2010" name="Cell">
        <title>A tissue-specific atlas of mouse protein phosphorylation and expression.</title>
        <authorList>
            <person name="Huttlin E.L."/>
            <person name="Jedrychowski M.P."/>
            <person name="Elias J.E."/>
            <person name="Goswami T."/>
            <person name="Rad R."/>
            <person name="Beausoleil S.A."/>
            <person name="Villen J."/>
            <person name="Haas W."/>
            <person name="Sowa M.E."/>
            <person name="Gygi S.P."/>
        </authorList>
    </citation>
    <scope>PHOSPHORYLATION [LARGE SCALE ANALYSIS] AT SER-336; SER-339; SER-343; SER-561; SER-825; SER-828; SER-829; SER-885; SER-888; THR-896; THR-905; THR-945; SER-967; SER-974; SER-992; SER-1013; SER-1141; SER-1151; SER-1153; SER-1204; SER-1207; SER-1208; SER-1225; SER-1242; SER-1247; SER-1251; SER-1253; SER-1255; SER-1257; SER-1260; SER-1307; SER-1317; SER-1319; SER-1321; THR-1323; SER-1325; SER-1334; SER-1371; SER-1373; SER-1382; SER-1384; SER-1391; SER-1395; SER-1403; TYR-1405; SER-1438; SER-1497; SER-1508; SER-1523; SER-1616; SER-1621; SER-1662; SER-1686; SER-1768; SER-1775; SER-1778; SER-1781; THR-1784; SER-1788; SER-1789; TYR-1792; SER-1793; SER-1797; SER-1877; SER-1911; THR-1928; THR-1945; SER-2030 AND SER-2410</scope>
    <scope>IDENTIFICATION BY MASS SPECTROMETRY [LARGE SCALE ANALYSIS]</scope>
    <source>
        <tissue>Brain</tissue>
        <tissue>Brown adipose tissue</tissue>
        <tissue>Heart</tissue>
        <tissue>Kidney</tissue>
        <tissue>Lung</tissue>
        <tissue>Pancreas</tissue>
        <tissue>Spleen</tissue>
        <tissue>Testis</tissue>
    </source>
</reference>
<reference key="13">
    <citation type="journal article" date="2011" name="Biochimie">
        <title>Microtubule association of a neuronal RNA-binding protein HuD through its binding to the light chain of MAP1B.</title>
        <authorList>
            <person name="Fujiwara Y."/>
            <person name="Kasashima K."/>
            <person name="Saito K."/>
            <person name="Fukuda M."/>
            <person name="Fukao A."/>
            <person name="Sasano Y."/>
            <person name="Inoue K."/>
            <person name="Fujiwara T."/>
            <person name="Sakamoto H."/>
        </authorList>
    </citation>
    <scope>INTERACTION WITH ELAVL4</scope>
    <scope>SUBCELLULAR LOCATION</scope>
</reference>
<reference key="14">
    <citation type="journal article" date="2011" name="J. Biol. Chem.">
        <title>Microtubule-associated protein 1B (MAP1B) is required for dendritic spine development and synaptic maturation.</title>
        <authorList>
            <person name="Tortosa E."/>
            <person name="Montenegro-Venegas C."/>
            <person name="Benoist M."/>
            <person name="Hartel S."/>
            <person name="Gonzalez-Billault C."/>
            <person name="Esteban J.A."/>
            <person name="Avila J."/>
        </authorList>
    </citation>
    <scope>FUNCTION</scope>
    <scope>SUBCELLULAR LOCATION</scope>
</reference>
<reference key="15">
    <citation type="journal article" date="2014" name="Mol. Cell. Proteomics">
        <title>Immunoaffinity enrichment and mass spectrometry analysis of protein methylation.</title>
        <authorList>
            <person name="Guo A."/>
            <person name="Gu H."/>
            <person name="Zhou J."/>
            <person name="Mulhern D."/>
            <person name="Wang Y."/>
            <person name="Lee K.A."/>
            <person name="Yang V."/>
            <person name="Aguiar M."/>
            <person name="Kornhauser J."/>
            <person name="Jia X."/>
            <person name="Ren J."/>
            <person name="Beausoleil S.A."/>
            <person name="Silva J.C."/>
            <person name="Vemulapalli V."/>
            <person name="Bedford M.T."/>
            <person name="Comb M.J."/>
        </authorList>
    </citation>
    <scope>METHYLATION [LARGE SCALE ANALYSIS] AT ARG-2060</scope>
    <scope>IDENTIFICATION BY MASS SPECTROMETRY [LARGE SCALE ANALYSIS]</scope>
    <source>
        <tissue>Brain</tissue>
    </source>
</reference>
<reference key="16">
    <citation type="journal article" date="2020" name="JCI Insight">
        <title>Mutations of MAP1B encoding a microtubule-associated phosphoprotein cause sensorineural hearing loss.</title>
        <authorList>
            <person name="Cui L."/>
            <person name="Zheng J."/>
            <person name="Zhao Q."/>
            <person name="Chen J.R."/>
            <person name="Liu H."/>
            <person name="Peng G."/>
            <person name="Wu Y."/>
            <person name="Chen C."/>
            <person name="He Q."/>
            <person name="Shi H."/>
            <person name="Yin S."/>
            <person name="Friedman R.A."/>
            <person name="Chen Y."/>
            <person name="Guan M.X."/>
        </authorList>
    </citation>
    <scope>FUNCTION</scope>
    <scope>TISSUE SPECIFICITY</scope>
</reference>
<dbReference type="EMBL" id="X51396">
    <property type="protein sequence ID" value="CAA35761.1"/>
    <property type="molecule type" value="mRNA"/>
</dbReference>
<dbReference type="EMBL" id="AC170188">
    <property type="status" value="NOT_ANNOTATED_CDS"/>
    <property type="molecule type" value="Genomic_DNA"/>
</dbReference>
<dbReference type="CCDS" id="CCDS26723.1"/>
<dbReference type="PIR" id="S07549">
    <property type="entry name" value="QRMSP1"/>
</dbReference>
<dbReference type="RefSeq" id="NP_032660.2">
    <property type="nucleotide sequence ID" value="NM_008634.2"/>
</dbReference>
<dbReference type="BioGRID" id="201584">
    <property type="interactions" value="51"/>
</dbReference>
<dbReference type="CORUM" id="P14873"/>
<dbReference type="FunCoup" id="P14873">
    <property type="interactions" value="838"/>
</dbReference>
<dbReference type="IntAct" id="P14873">
    <property type="interactions" value="15"/>
</dbReference>
<dbReference type="MINT" id="P14873"/>
<dbReference type="STRING" id="10090.ENSMUSP00000068374"/>
<dbReference type="GlyGen" id="P14873">
    <property type="glycosylation" value="7 sites, 1 O-linked glycan (6 sites)"/>
</dbReference>
<dbReference type="iPTMnet" id="P14873"/>
<dbReference type="MetOSite" id="P14873"/>
<dbReference type="PhosphoSitePlus" id="P14873"/>
<dbReference type="SwissPalm" id="P14873"/>
<dbReference type="jPOST" id="P14873"/>
<dbReference type="PaxDb" id="10090-ENSMUSP00000068374"/>
<dbReference type="PeptideAtlas" id="P14873"/>
<dbReference type="ProteomicsDB" id="295778"/>
<dbReference type="Pumba" id="P14873"/>
<dbReference type="Antibodypedia" id="4064">
    <property type="antibodies" value="304 antibodies from 35 providers"/>
</dbReference>
<dbReference type="DNASU" id="17755"/>
<dbReference type="Ensembl" id="ENSMUST00000064762.6">
    <property type="protein sequence ID" value="ENSMUSP00000068374.5"/>
    <property type="gene ID" value="ENSMUSG00000052727.7"/>
</dbReference>
<dbReference type="GeneID" id="17755"/>
<dbReference type="KEGG" id="mmu:17755"/>
<dbReference type="UCSC" id="uc007rpr.2">
    <property type="organism name" value="mouse"/>
</dbReference>
<dbReference type="AGR" id="MGI:1306778"/>
<dbReference type="CTD" id="4131"/>
<dbReference type="MGI" id="MGI:1306778">
    <property type="gene designation" value="Map1b"/>
</dbReference>
<dbReference type="VEuPathDB" id="HostDB:ENSMUSG00000052727"/>
<dbReference type="eggNOG" id="KOG3592">
    <property type="taxonomic scope" value="Eukaryota"/>
</dbReference>
<dbReference type="GeneTree" id="ENSGT00940000155897"/>
<dbReference type="HOGENOM" id="CLU_000285_0_1_1"/>
<dbReference type="InParanoid" id="P14873"/>
<dbReference type="OMA" id="HDHRSPE"/>
<dbReference type="OrthoDB" id="5371837at2759"/>
<dbReference type="PhylomeDB" id="P14873"/>
<dbReference type="TreeFam" id="TF350229"/>
<dbReference type="BioGRID-ORCS" id="17755">
    <property type="hits" value="0 hits in 76 CRISPR screens"/>
</dbReference>
<dbReference type="CD-CODE" id="CE726F99">
    <property type="entry name" value="Postsynaptic density"/>
</dbReference>
<dbReference type="ChiTaRS" id="Map1b">
    <property type="organism name" value="mouse"/>
</dbReference>
<dbReference type="PRO" id="PR:P14873"/>
<dbReference type="Proteomes" id="UP000000589">
    <property type="component" value="Chromosome 13"/>
</dbReference>
<dbReference type="RNAct" id="P14873">
    <property type="molecule type" value="protein"/>
</dbReference>
<dbReference type="Bgee" id="ENSMUSG00000052727">
    <property type="expression patterns" value="Expressed in facial nucleus and 241 other cell types or tissues"/>
</dbReference>
<dbReference type="ExpressionAtlas" id="P14873">
    <property type="expression patterns" value="baseline and differential"/>
</dbReference>
<dbReference type="GO" id="GO:0097440">
    <property type="term" value="C:apical dendrite"/>
    <property type="evidence" value="ECO:0007669"/>
    <property type="project" value="Ensembl"/>
</dbReference>
<dbReference type="GO" id="GO:0097441">
    <property type="term" value="C:basal dendrite"/>
    <property type="evidence" value="ECO:0007669"/>
    <property type="project" value="Ensembl"/>
</dbReference>
<dbReference type="GO" id="GO:0005829">
    <property type="term" value="C:cytosol"/>
    <property type="evidence" value="ECO:0000314"/>
    <property type="project" value="MGI"/>
</dbReference>
<dbReference type="GO" id="GO:0030425">
    <property type="term" value="C:dendrite"/>
    <property type="evidence" value="ECO:0000314"/>
    <property type="project" value="ARUK-UCL"/>
</dbReference>
<dbReference type="GO" id="GO:0043197">
    <property type="term" value="C:dendritic spine"/>
    <property type="evidence" value="ECO:0007669"/>
    <property type="project" value="UniProtKB-SubCell"/>
</dbReference>
<dbReference type="GO" id="GO:0098978">
    <property type="term" value="C:glutamatergic synapse"/>
    <property type="evidence" value="ECO:0000314"/>
    <property type="project" value="SynGO"/>
</dbReference>
<dbReference type="GO" id="GO:0030426">
    <property type="term" value="C:growth cone"/>
    <property type="evidence" value="ECO:0007669"/>
    <property type="project" value="Ensembl"/>
</dbReference>
<dbReference type="GO" id="GO:0097457">
    <property type="term" value="C:hippocampal mossy fiber"/>
    <property type="evidence" value="ECO:0007669"/>
    <property type="project" value="Ensembl"/>
</dbReference>
<dbReference type="GO" id="GO:0005874">
    <property type="term" value="C:microtubule"/>
    <property type="evidence" value="ECO:0007669"/>
    <property type="project" value="UniProtKB-KW"/>
</dbReference>
<dbReference type="GO" id="GO:0005875">
    <property type="term" value="C:microtubule associated complex"/>
    <property type="evidence" value="ECO:0000304"/>
    <property type="project" value="MGI"/>
</dbReference>
<dbReference type="GO" id="GO:0043025">
    <property type="term" value="C:neuronal cell body"/>
    <property type="evidence" value="ECO:0000314"/>
    <property type="project" value="ARUK-UCL"/>
</dbReference>
<dbReference type="GO" id="GO:0043204">
    <property type="term" value="C:perikaryon"/>
    <property type="evidence" value="ECO:0007669"/>
    <property type="project" value="Ensembl"/>
</dbReference>
<dbReference type="GO" id="GO:0048471">
    <property type="term" value="C:perinuclear region of cytoplasm"/>
    <property type="evidence" value="ECO:0007669"/>
    <property type="project" value="Ensembl"/>
</dbReference>
<dbReference type="GO" id="GO:0001750">
    <property type="term" value="C:photoreceptor outer segment"/>
    <property type="evidence" value="ECO:0000314"/>
    <property type="project" value="MGI"/>
</dbReference>
<dbReference type="GO" id="GO:0005886">
    <property type="term" value="C:plasma membrane"/>
    <property type="evidence" value="ECO:0007669"/>
    <property type="project" value="Ensembl"/>
</dbReference>
<dbReference type="GO" id="GO:0098794">
    <property type="term" value="C:postsynapse"/>
    <property type="evidence" value="ECO:0000314"/>
    <property type="project" value="SynGO"/>
</dbReference>
<dbReference type="GO" id="GO:0014069">
    <property type="term" value="C:postsynaptic density"/>
    <property type="evidence" value="ECO:0000314"/>
    <property type="project" value="MGI"/>
</dbReference>
<dbReference type="GO" id="GO:0043196">
    <property type="term" value="C:varicosity"/>
    <property type="evidence" value="ECO:0007669"/>
    <property type="project" value="Ensembl"/>
</dbReference>
<dbReference type="GO" id="GO:0003779">
    <property type="term" value="F:actin binding"/>
    <property type="evidence" value="ECO:0007669"/>
    <property type="project" value="Ensembl"/>
</dbReference>
<dbReference type="GO" id="GO:0005519">
    <property type="term" value="F:cytoskeletal regulatory protein binding"/>
    <property type="evidence" value="ECO:0000304"/>
    <property type="project" value="MGI"/>
</dbReference>
<dbReference type="GO" id="GO:0008017">
    <property type="term" value="F:microtubule binding"/>
    <property type="evidence" value="ECO:0007669"/>
    <property type="project" value="Ensembl"/>
</dbReference>
<dbReference type="GO" id="GO:0005543">
    <property type="term" value="F:phospholipid binding"/>
    <property type="evidence" value="ECO:0007669"/>
    <property type="project" value="Ensembl"/>
</dbReference>
<dbReference type="GO" id="GO:0044877">
    <property type="term" value="F:protein-containing complex binding"/>
    <property type="evidence" value="ECO:0007669"/>
    <property type="project" value="Ensembl"/>
</dbReference>
<dbReference type="GO" id="GO:0048675">
    <property type="term" value="P:axon extension"/>
    <property type="evidence" value="ECO:0000315"/>
    <property type="project" value="MGI"/>
</dbReference>
<dbReference type="GO" id="GO:0007409">
    <property type="term" value="P:axonogenesis"/>
    <property type="evidence" value="ECO:0000316"/>
    <property type="project" value="MGI"/>
</dbReference>
<dbReference type="GO" id="GO:0071363">
    <property type="term" value="P:cellular response to growth factor stimulus"/>
    <property type="evidence" value="ECO:0007669"/>
    <property type="project" value="Ensembl"/>
</dbReference>
<dbReference type="GO" id="GO:0071375">
    <property type="term" value="P:cellular response to peptide hormone stimulus"/>
    <property type="evidence" value="ECO:0007669"/>
    <property type="project" value="Ensembl"/>
</dbReference>
<dbReference type="GO" id="GO:0016358">
    <property type="term" value="P:dendrite development"/>
    <property type="evidence" value="ECO:0000315"/>
    <property type="project" value="MGI"/>
</dbReference>
<dbReference type="GO" id="GO:0021700">
    <property type="term" value="P:developmental maturation"/>
    <property type="evidence" value="ECO:0007669"/>
    <property type="project" value="Ensembl"/>
</dbReference>
<dbReference type="GO" id="GO:0061162">
    <property type="term" value="P:establishment of monopolar cell polarity"/>
    <property type="evidence" value="ECO:0000315"/>
    <property type="project" value="MGI"/>
</dbReference>
<dbReference type="GO" id="GO:0051915">
    <property type="term" value="P:induction of synaptic plasticity by chemical substance"/>
    <property type="evidence" value="ECO:0007669"/>
    <property type="project" value="Ensembl"/>
</dbReference>
<dbReference type="GO" id="GO:0046907">
    <property type="term" value="P:intracellular transport"/>
    <property type="evidence" value="ECO:0000315"/>
    <property type="project" value="MGI"/>
</dbReference>
<dbReference type="GO" id="GO:0001578">
    <property type="term" value="P:microtubule bundle formation"/>
    <property type="evidence" value="ECO:0000315"/>
    <property type="project" value="MGI"/>
</dbReference>
<dbReference type="GO" id="GO:0007017">
    <property type="term" value="P:microtubule-based process"/>
    <property type="evidence" value="ECO:0000304"/>
    <property type="project" value="MGI"/>
</dbReference>
<dbReference type="GO" id="GO:0047497">
    <property type="term" value="P:mitochondrion transport along microtubule"/>
    <property type="evidence" value="ECO:0000315"/>
    <property type="project" value="MGI"/>
</dbReference>
<dbReference type="GO" id="GO:0032387">
    <property type="term" value="P:negative regulation of intracellular transport"/>
    <property type="evidence" value="ECO:0000315"/>
    <property type="project" value="MGI"/>
</dbReference>
<dbReference type="GO" id="GO:0007026">
    <property type="term" value="P:negative regulation of microtubule depolymerization"/>
    <property type="evidence" value="ECO:0007669"/>
    <property type="project" value="Ensembl"/>
</dbReference>
<dbReference type="GO" id="GO:0031175">
    <property type="term" value="P:neuron projection development"/>
    <property type="evidence" value="ECO:0000250"/>
    <property type="project" value="UniProtKB"/>
</dbReference>
<dbReference type="GO" id="GO:0071895">
    <property type="term" value="P:odontoblast differentiation"/>
    <property type="evidence" value="ECO:0007669"/>
    <property type="project" value="Ensembl"/>
</dbReference>
<dbReference type="GO" id="GO:0014012">
    <property type="term" value="P:peripheral nervous system axon regeneration"/>
    <property type="evidence" value="ECO:0007669"/>
    <property type="project" value="Ensembl"/>
</dbReference>
<dbReference type="GO" id="GO:0045773">
    <property type="term" value="P:positive regulation of axon extension"/>
    <property type="evidence" value="ECO:0007669"/>
    <property type="project" value="Ensembl"/>
</dbReference>
<dbReference type="GO" id="GO:0031116">
    <property type="term" value="P:positive regulation of microtubule polymerization"/>
    <property type="evidence" value="ECO:0007669"/>
    <property type="project" value="Ensembl"/>
</dbReference>
<dbReference type="GO" id="GO:0045666">
    <property type="term" value="P:positive regulation of neuron differentiation"/>
    <property type="evidence" value="ECO:0007669"/>
    <property type="project" value="Ensembl"/>
</dbReference>
<dbReference type="GO" id="GO:0150052">
    <property type="term" value="P:regulation of postsynapse assembly"/>
    <property type="evidence" value="ECO:0000314"/>
    <property type="project" value="SynGO"/>
</dbReference>
<dbReference type="GO" id="GO:0009743">
    <property type="term" value="P:response to carbohydrate"/>
    <property type="evidence" value="ECO:0007669"/>
    <property type="project" value="Ensembl"/>
</dbReference>
<dbReference type="GO" id="GO:0032355">
    <property type="term" value="P:response to estradiol"/>
    <property type="evidence" value="ECO:0007669"/>
    <property type="project" value="Ensembl"/>
</dbReference>
<dbReference type="GO" id="GO:0017085">
    <property type="term" value="P:response to insecticide"/>
    <property type="evidence" value="ECO:0007669"/>
    <property type="project" value="Ensembl"/>
</dbReference>
<dbReference type="GO" id="GO:0009612">
    <property type="term" value="P:response to mechanical stimulus"/>
    <property type="evidence" value="ECO:0007669"/>
    <property type="project" value="Ensembl"/>
</dbReference>
<dbReference type="GO" id="GO:0033189">
    <property type="term" value="P:response to vitamin A"/>
    <property type="evidence" value="ECO:0007669"/>
    <property type="project" value="Ensembl"/>
</dbReference>
<dbReference type="GO" id="GO:0009410">
    <property type="term" value="P:response to xenobiotic stimulus"/>
    <property type="evidence" value="ECO:0007669"/>
    <property type="project" value="Ensembl"/>
</dbReference>
<dbReference type="GO" id="GO:0007416">
    <property type="term" value="P:synapse assembly"/>
    <property type="evidence" value="ECO:0007669"/>
    <property type="project" value="Ensembl"/>
</dbReference>
<dbReference type="InterPro" id="IPR026074">
    <property type="entry name" value="MAP1"/>
</dbReference>
<dbReference type="InterPro" id="IPR056617">
    <property type="entry name" value="MAP1B/S_N"/>
</dbReference>
<dbReference type="InterPro" id="IPR000102">
    <property type="entry name" value="MAP1B_neuraxin"/>
</dbReference>
<dbReference type="PANTHER" id="PTHR13843">
    <property type="entry name" value="MICROTUBULE-ASSOCIATED PROTEIN"/>
    <property type="match status" value="1"/>
</dbReference>
<dbReference type="PANTHER" id="PTHR13843:SF5">
    <property type="entry name" value="MICROTUBULE-ASSOCIATED PROTEIN 1B"/>
    <property type="match status" value="1"/>
</dbReference>
<dbReference type="Pfam" id="PF00414">
    <property type="entry name" value="MAP1B_neuraxin"/>
    <property type="match status" value="5"/>
</dbReference>
<dbReference type="Pfam" id="PF23415">
    <property type="entry name" value="MAPB1_N"/>
    <property type="match status" value="1"/>
</dbReference>
<dbReference type="Pfam" id="PF25281">
    <property type="entry name" value="MBL_MAP1B"/>
    <property type="match status" value="1"/>
</dbReference>
<dbReference type="PROSITE" id="PS00230">
    <property type="entry name" value="MAP1B_NEURAXIN"/>
    <property type="match status" value="8"/>
</dbReference>
<feature type="initiator methionine" description="Removed" evidence="3">
    <location>
        <position position="1"/>
    </location>
</feature>
<feature type="chain" id="PRO_0000018606" description="Microtubule-associated protein 1B">
    <location>
        <begin position="2"/>
        <end position="2464"/>
    </location>
</feature>
<feature type="chain" id="PRO_0000418380" description="MAP1B heavy chain">
    <location>
        <begin position="2"/>
        <end position="2202"/>
    </location>
</feature>
<feature type="chain" id="PRO_0000018607" description="MAP1 light chain LC1">
    <location>
        <begin position="2203"/>
        <end position="2464"/>
    </location>
</feature>
<feature type="repeat" description="MAP1B 1">
    <location>
        <begin position="1874"/>
        <end position="1890"/>
    </location>
</feature>
<feature type="repeat" description="MAP1B 2">
    <location>
        <begin position="1891"/>
        <end position="1907"/>
    </location>
</feature>
<feature type="repeat" description="MAP1B 3">
    <location>
        <begin position="1908"/>
        <end position="1924"/>
    </location>
</feature>
<feature type="repeat" description="MAP1B 4">
    <location>
        <begin position="1925"/>
        <end position="1941"/>
    </location>
</feature>
<feature type="repeat" description="MAP1B 5">
    <location>
        <begin position="1942"/>
        <end position="1958"/>
    </location>
</feature>
<feature type="repeat" description="MAP1B 6">
    <location>
        <begin position="1959"/>
        <end position="1975"/>
    </location>
</feature>
<feature type="repeat" description="MAP1B 7">
    <location>
        <begin position="1993"/>
        <end position="2009"/>
    </location>
</feature>
<feature type="repeat" description="MAP1B 8">
    <location>
        <begin position="2010"/>
        <end position="2026"/>
    </location>
</feature>
<feature type="repeat" description="MAP1B 9">
    <location>
        <begin position="2027"/>
        <end position="2043"/>
    </location>
</feature>
<feature type="repeat" description="MAP1B 10">
    <location>
        <begin position="2044"/>
        <end position="2060"/>
    </location>
</feature>
<feature type="region of interest" description="Disordered" evidence="4">
    <location>
        <begin position="1"/>
        <end position="26"/>
    </location>
</feature>
<feature type="region of interest" description="Disordered" evidence="4">
    <location>
        <begin position="520"/>
        <end position="777"/>
    </location>
</feature>
<feature type="region of interest" description="Disordered" evidence="4">
    <location>
        <begin position="860"/>
        <end position="1044"/>
    </location>
</feature>
<feature type="region of interest" description="Disordered" evidence="4">
    <location>
        <begin position="1060"/>
        <end position="1157"/>
    </location>
</feature>
<feature type="region of interest" description="Disordered" evidence="4">
    <location>
        <begin position="1179"/>
        <end position="1482"/>
    </location>
</feature>
<feature type="region of interest" description="Disordered" evidence="4">
    <location>
        <begin position="1513"/>
        <end position="1752"/>
    </location>
</feature>
<feature type="region of interest" description="Disordered" evidence="4">
    <location>
        <begin position="1764"/>
        <end position="1823"/>
    </location>
</feature>
<feature type="region of interest" description="Disordered" evidence="4">
    <location>
        <begin position="1848"/>
        <end position="1888"/>
    </location>
</feature>
<feature type="region of interest" description="Disordered" evidence="4">
    <location>
        <begin position="2049"/>
        <end position="2074"/>
    </location>
</feature>
<feature type="region of interest" description="Disordered" evidence="4">
    <location>
        <begin position="2090"/>
        <end position="2346"/>
    </location>
</feature>
<feature type="region of interest" description="Mediates interaction with TMEM185A" evidence="1">
    <location>
        <begin position="2290"/>
        <end position="2464"/>
    </location>
</feature>
<feature type="compositionally biased region" description="Basic and acidic residues" evidence="4">
    <location>
        <begin position="557"/>
        <end position="567"/>
    </location>
</feature>
<feature type="compositionally biased region" description="Basic and acidic residues" evidence="4">
    <location>
        <begin position="576"/>
        <end position="739"/>
    </location>
</feature>
<feature type="compositionally biased region" description="Basic and acidic residues" evidence="4">
    <location>
        <begin position="757"/>
        <end position="777"/>
    </location>
</feature>
<feature type="compositionally biased region" description="Acidic residues" evidence="4">
    <location>
        <begin position="898"/>
        <end position="910"/>
    </location>
</feature>
<feature type="compositionally biased region" description="Basic and acidic residues" evidence="4">
    <location>
        <begin position="911"/>
        <end position="920"/>
    </location>
</feature>
<feature type="compositionally biased region" description="Acidic residues" evidence="4">
    <location>
        <begin position="921"/>
        <end position="957"/>
    </location>
</feature>
<feature type="compositionally biased region" description="Basic and acidic residues" evidence="4">
    <location>
        <begin position="974"/>
        <end position="995"/>
    </location>
</feature>
<feature type="compositionally biased region" description="Acidic residues" evidence="4">
    <location>
        <begin position="1011"/>
        <end position="1023"/>
    </location>
</feature>
<feature type="compositionally biased region" description="Basic and acidic residues" evidence="4">
    <location>
        <begin position="1024"/>
        <end position="1038"/>
    </location>
</feature>
<feature type="compositionally biased region" description="Polar residues" evidence="4">
    <location>
        <begin position="1065"/>
        <end position="1075"/>
    </location>
</feature>
<feature type="compositionally biased region" description="Acidic residues" evidence="4">
    <location>
        <begin position="1097"/>
        <end position="1108"/>
    </location>
</feature>
<feature type="compositionally biased region" description="Polar residues" evidence="4">
    <location>
        <begin position="1111"/>
        <end position="1127"/>
    </location>
</feature>
<feature type="compositionally biased region" description="Basic and acidic residues" evidence="4">
    <location>
        <begin position="1186"/>
        <end position="1195"/>
    </location>
</feature>
<feature type="compositionally biased region" description="Polar residues" evidence="4">
    <location>
        <begin position="1198"/>
        <end position="1207"/>
    </location>
</feature>
<feature type="compositionally biased region" description="Basic and acidic residues" evidence="4">
    <location>
        <begin position="1210"/>
        <end position="1247"/>
    </location>
</feature>
<feature type="compositionally biased region" description="Basic and acidic residues" evidence="4">
    <location>
        <begin position="1301"/>
        <end position="1313"/>
    </location>
</feature>
<feature type="compositionally biased region" description="Polar residues" evidence="4">
    <location>
        <begin position="1317"/>
        <end position="1335"/>
    </location>
</feature>
<feature type="compositionally biased region" description="Low complexity" evidence="4">
    <location>
        <begin position="1390"/>
        <end position="1403"/>
    </location>
</feature>
<feature type="compositionally biased region" description="Basic and acidic residues" evidence="4">
    <location>
        <begin position="1418"/>
        <end position="1439"/>
    </location>
</feature>
<feature type="compositionally biased region" description="Basic and acidic residues" evidence="4">
    <location>
        <begin position="1451"/>
        <end position="1475"/>
    </location>
</feature>
<feature type="compositionally biased region" description="Polar residues" evidence="4">
    <location>
        <begin position="1515"/>
        <end position="1526"/>
    </location>
</feature>
<feature type="compositionally biased region" description="Low complexity" evidence="4">
    <location>
        <begin position="1545"/>
        <end position="1557"/>
    </location>
</feature>
<feature type="compositionally biased region" description="Polar residues" evidence="4">
    <location>
        <begin position="1586"/>
        <end position="1603"/>
    </location>
</feature>
<feature type="compositionally biased region" description="Polar residues" evidence="4">
    <location>
        <begin position="1705"/>
        <end position="1723"/>
    </location>
</feature>
<feature type="compositionally biased region" description="Low complexity" evidence="4">
    <location>
        <begin position="1724"/>
        <end position="1735"/>
    </location>
</feature>
<feature type="compositionally biased region" description="Polar residues" evidence="4">
    <location>
        <begin position="1786"/>
        <end position="1803"/>
    </location>
</feature>
<feature type="compositionally biased region" description="Basic and acidic residues" evidence="4">
    <location>
        <begin position="2057"/>
        <end position="2074"/>
    </location>
</feature>
<feature type="compositionally biased region" description="Polar residues" evidence="4">
    <location>
        <begin position="2142"/>
        <end position="2156"/>
    </location>
</feature>
<feature type="compositionally biased region" description="Basic and acidic residues" evidence="4">
    <location>
        <begin position="2275"/>
        <end position="2296"/>
    </location>
</feature>
<feature type="compositionally biased region" description="Basic and acidic residues" evidence="4">
    <location>
        <begin position="2305"/>
        <end position="2317"/>
    </location>
</feature>
<feature type="compositionally biased region" description="Low complexity" evidence="4">
    <location>
        <begin position="2318"/>
        <end position="2343"/>
    </location>
</feature>
<feature type="modified residue" description="N-acetylalanine" evidence="3">
    <location>
        <position position="2"/>
    </location>
</feature>
<feature type="modified residue" description="Phosphoserine" evidence="19">
    <location>
        <position position="336"/>
    </location>
</feature>
<feature type="modified residue" description="Phosphoserine" evidence="19">
    <location>
        <position position="339"/>
    </location>
</feature>
<feature type="modified residue" description="Phosphoserine" evidence="2">
    <location>
        <position position="341"/>
    </location>
</feature>
<feature type="modified residue" description="Phosphoserine" evidence="19">
    <location>
        <position position="343"/>
    </location>
</feature>
<feature type="modified residue" description="Phosphothreonine" evidence="2">
    <location>
        <position position="527"/>
    </location>
</feature>
<feature type="modified residue" description="Phosphoserine" evidence="17">
    <location>
        <position position="541"/>
    </location>
</feature>
<feature type="modified residue" description="Phosphoserine" evidence="17">
    <location>
        <position position="544"/>
    </location>
</feature>
<feature type="modified residue" description="Phosphoserine" evidence="17 19">
    <location>
        <position position="561"/>
    </location>
</feature>
<feature type="modified residue" description="Phosphoserine" evidence="18">
    <location>
        <position position="614"/>
    </location>
</feature>
<feature type="modified residue" description="Phosphoserine" evidence="19">
    <location>
        <position position="825"/>
    </location>
</feature>
<feature type="modified residue" description="Phosphoserine" evidence="19">
    <location>
        <position position="828"/>
    </location>
</feature>
<feature type="modified residue" description="Phosphoserine" evidence="19">
    <location>
        <position position="829"/>
    </location>
</feature>
<feature type="modified residue" description="Phosphoserine" evidence="19">
    <location>
        <position position="885"/>
    </location>
</feature>
<feature type="modified residue" description="Phosphoserine" evidence="19">
    <location>
        <position position="888"/>
    </location>
</feature>
<feature type="modified residue" description="Phosphothreonine" evidence="19">
    <location>
        <position position="896"/>
    </location>
</feature>
<feature type="modified residue" description="Phosphothreonine" evidence="19">
    <location>
        <position position="905"/>
    </location>
</feature>
<feature type="modified residue" description="Phosphoserine" evidence="2">
    <location>
        <position position="933"/>
    </location>
</feature>
<feature type="modified residue" description="Phosphoserine" evidence="3">
    <location>
        <position position="934"/>
    </location>
</feature>
<feature type="modified residue" description="Phosphothreonine" evidence="19">
    <location>
        <position position="945"/>
    </location>
</feature>
<feature type="modified residue" description="Phosphoserine" evidence="2">
    <location>
        <position position="960"/>
    </location>
</feature>
<feature type="modified residue" description="Phosphoserine" evidence="19">
    <location>
        <position position="967"/>
    </location>
</feature>
<feature type="modified residue" description="Phosphoserine" evidence="19">
    <location>
        <position position="974"/>
    </location>
</feature>
<feature type="modified residue" description="Phosphoserine" evidence="17">
    <location>
        <position position="989"/>
    </location>
</feature>
<feature type="modified residue" description="Phosphoserine" evidence="19">
    <location>
        <position position="992"/>
    </location>
</feature>
<feature type="modified residue" description="Phosphoserine" evidence="17 19">
    <location>
        <position position="1013"/>
    </location>
</feature>
<feature type="modified residue" description="Phosphoserine" evidence="19">
    <location>
        <position position="1141"/>
    </location>
</feature>
<feature type="modified residue" description="Phosphoserine" evidence="19">
    <location>
        <position position="1151"/>
    </location>
</feature>
<feature type="modified residue" description="Phosphoserine" evidence="19">
    <location>
        <position position="1153"/>
    </location>
</feature>
<feature type="modified residue" description="Phosphoserine" evidence="2">
    <location>
        <position position="1183"/>
    </location>
</feature>
<feature type="modified residue" description="Phosphoserine" evidence="2">
    <location>
        <position position="1186"/>
    </location>
</feature>
<feature type="modified residue" description="Phosphoserine" evidence="19">
    <location>
        <position position="1204"/>
    </location>
</feature>
<feature type="modified residue" description="Phosphoserine" evidence="19">
    <location>
        <position position="1207"/>
    </location>
</feature>
<feature type="modified residue" description="Phosphoserine" evidence="19">
    <location>
        <position position="1208"/>
    </location>
</feature>
<feature type="modified residue" description="Phosphoserine" evidence="19">
    <location>
        <position position="1225"/>
    </location>
</feature>
<feature type="modified residue" description="Phosphoserine" evidence="19">
    <location>
        <position position="1242"/>
    </location>
</feature>
<feature type="modified residue" description="Phosphoserine" evidence="19">
    <location>
        <position position="1247"/>
    </location>
</feature>
<feature type="modified residue" description="Phosphoserine" evidence="19">
    <location>
        <position position="1251"/>
    </location>
</feature>
<feature type="modified residue" description="Phosphoserine" evidence="19">
    <location>
        <position position="1253"/>
    </location>
</feature>
<feature type="modified residue" description="Phosphoserine" evidence="19">
    <location>
        <position position="1255"/>
    </location>
</feature>
<feature type="modified residue" description="Phosphoserine" evidence="19">
    <location>
        <position position="1257"/>
    </location>
</feature>
<feature type="modified residue" description="Phosphoserine" evidence="16 19">
    <location>
        <position position="1260"/>
    </location>
</feature>
<feature type="modified residue" description="Phosphoserine" evidence="3">
    <location>
        <position position="1271"/>
    </location>
</feature>
<feature type="modified residue" description="Phosphoserine" evidence="3">
    <location>
        <position position="1275"/>
    </location>
</feature>
<feature type="modified residue" description="Phosphothreonine" evidence="3">
    <location>
        <position position="1277"/>
    </location>
</feature>
<feature type="modified residue" description="Phosphoserine" evidence="3">
    <location>
        <position position="1293"/>
    </location>
</feature>
<feature type="modified residue" description="Phosphoserine" evidence="17 19">
    <location>
        <position position="1307"/>
    </location>
</feature>
<feature type="modified residue" description="Phosphoserine" evidence="19">
    <location>
        <position position="1317"/>
    </location>
</feature>
<feature type="modified residue" description="Phosphoserine" evidence="19">
    <location>
        <position position="1319"/>
    </location>
</feature>
<feature type="modified residue" description="Phosphoserine" evidence="19">
    <location>
        <position position="1321"/>
    </location>
</feature>
<feature type="modified residue" description="Phosphothreonine" evidence="19">
    <location>
        <position position="1323"/>
    </location>
</feature>
<feature type="modified residue" description="Phosphoserine" evidence="19">
    <location>
        <position position="1325"/>
    </location>
</feature>
<feature type="modified residue" description="Phosphoserine" evidence="19">
    <location>
        <position position="1334"/>
    </location>
</feature>
<feature type="modified residue" description="Phosphoserine" evidence="19">
    <location>
        <position position="1371"/>
    </location>
</feature>
<feature type="modified residue" description="Phosphoserine" evidence="19">
    <location>
        <position position="1373"/>
    </location>
</feature>
<feature type="modified residue" description="Phosphoserine" evidence="19">
    <location>
        <position position="1382"/>
    </location>
</feature>
<feature type="modified residue" description="Phosphoserine" evidence="19">
    <location>
        <position position="1384"/>
    </location>
</feature>
<feature type="modified residue" description="Phosphoserine" evidence="16 19">
    <location>
        <position position="1391"/>
    </location>
</feature>
<feature type="modified residue" description="Phosphoserine" evidence="16 19">
    <location>
        <position position="1395"/>
    </location>
</feature>
<feature type="modified residue" description="Phosphoserine" evidence="19">
    <location>
        <position position="1403"/>
    </location>
</feature>
<feature type="modified residue" description="Phosphotyrosine" evidence="19">
    <location>
        <position position="1405"/>
    </location>
</feature>
<feature type="modified residue" description="Phosphoserine" evidence="3">
    <location>
        <position position="1422"/>
    </location>
</feature>
<feature type="modified residue" description="Phosphoserine" evidence="17 18 19">
    <location>
        <position position="1438"/>
    </location>
</feature>
<feature type="modified residue" description="Phosphoserine" evidence="18 19">
    <location>
        <position position="1497"/>
    </location>
</feature>
<feature type="modified residue" description="Phosphoserine" evidence="19">
    <location>
        <position position="1508"/>
    </location>
</feature>
<feature type="modified residue" description="Phosphoserine" evidence="2">
    <location>
        <position position="1516"/>
    </location>
</feature>
<feature type="modified residue" description="Phosphoserine" evidence="2">
    <location>
        <position position="1518"/>
    </location>
</feature>
<feature type="modified residue" description="Phosphothreonine" evidence="2">
    <location>
        <position position="1521"/>
    </location>
</feature>
<feature type="modified residue" description="Phosphoserine" evidence="19">
    <location>
        <position position="1523"/>
    </location>
</feature>
<feature type="modified residue" description="Phosphoserine" evidence="3">
    <location>
        <position position="1614"/>
    </location>
</feature>
<feature type="modified residue" description="Phosphoserine" evidence="19">
    <location>
        <position position="1616"/>
    </location>
</feature>
<feature type="modified residue" description="Phosphoserine" evidence="19">
    <location>
        <position position="1621"/>
    </location>
</feature>
<feature type="modified residue" description="Phosphoserine" evidence="3">
    <location>
        <position position="1649"/>
    </location>
</feature>
<feature type="modified residue" description="Phosphoserine" evidence="2">
    <location>
        <position position="1659"/>
    </location>
</feature>
<feature type="modified residue" description="Phosphoserine" evidence="19">
    <location>
        <position position="1662"/>
    </location>
</feature>
<feature type="modified residue" description="Phosphoserine" evidence="19">
    <location>
        <position position="1686"/>
    </location>
</feature>
<feature type="modified residue" description="Phosphoserine" evidence="19">
    <location>
        <position position="1768"/>
    </location>
</feature>
<feature type="modified residue" description="Phosphoserine" evidence="17 18 19">
    <location>
        <position position="1775"/>
    </location>
</feature>
<feature type="modified residue" description="Phosphoserine" evidence="19">
    <location>
        <position position="1778"/>
    </location>
</feature>
<feature type="modified residue" description="Phosphoserine" evidence="19">
    <location>
        <position position="1781"/>
    </location>
</feature>
<feature type="modified residue" description="Phosphothreonine" evidence="19">
    <location>
        <position position="1784"/>
    </location>
</feature>
<feature type="modified residue" description="Phosphoserine" evidence="19">
    <location>
        <position position="1788"/>
    </location>
</feature>
<feature type="modified residue" description="Phosphoserine" evidence="19">
    <location>
        <position position="1789"/>
    </location>
</feature>
<feature type="modified residue" description="Phosphotyrosine" evidence="19">
    <location>
        <position position="1792"/>
    </location>
</feature>
<feature type="modified residue" description="Phosphoserine" evidence="19">
    <location>
        <position position="1793"/>
    </location>
</feature>
<feature type="modified residue" description="Phosphoserine" evidence="19">
    <location>
        <position position="1797"/>
    </location>
</feature>
<feature type="modified residue" description="Phosphoserine" evidence="2">
    <location>
        <position position="1815"/>
    </location>
</feature>
<feature type="modified residue" description="Phosphoserine" evidence="19">
    <location>
        <position position="1877"/>
    </location>
</feature>
<feature type="modified residue" description="Phosphoserine" evidence="17 19">
    <location>
        <position position="1911"/>
    </location>
</feature>
<feature type="modified residue" description="Phosphoserine" evidence="3">
    <location>
        <position position="1915"/>
    </location>
</feature>
<feature type="modified residue" description="Phosphothreonine" evidence="19">
    <location>
        <position position="1928"/>
    </location>
</feature>
<feature type="modified residue" description="Phosphothreonine" evidence="19">
    <location>
        <position position="1945"/>
    </location>
</feature>
<feature type="modified residue" description="Phosphoserine" evidence="19">
    <location>
        <position position="2030"/>
    </location>
</feature>
<feature type="modified residue" description="Omega-N-methylarginine" evidence="20">
    <location>
        <position position="2060"/>
    </location>
</feature>
<feature type="modified residue" description="Phosphoserine" evidence="3">
    <location>
        <position position="2205"/>
    </location>
</feature>
<feature type="modified residue" description="Phosphoserine" evidence="3">
    <location>
        <position position="2267"/>
    </location>
</feature>
<feature type="modified residue" description="Phosphoserine" evidence="3">
    <location>
        <position position="2285"/>
    </location>
</feature>
<feature type="modified residue" description="Phosphothreonine" evidence="3">
    <location>
        <position position="2301"/>
    </location>
</feature>
<feature type="modified residue" description="Phosphoserine" evidence="19">
    <location>
        <position position="2410"/>
    </location>
</feature>
<feature type="modified residue" description="S-nitrosocysteine" evidence="8">
    <location>
        <position position="2460"/>
    </location>
</feature>
<feature type="sequence conflict" description="In Ref. 1; CAA35761." evidence="14" ref="1">
    <original>L</original>
    <variation>Q</variation>
    <location>
        <position position="743"/>
    </location>
</feature>
<feature type="sequence conflict" description="In Ref. 1; CAA35761." evidence="14" ref="1">
    <original>TEKP</original>
    <variation>SENA</variation>
    <location>
        <begin position="1348"/>
        <end position="1351"/>
    </location>
</feature>
<feature type="sequence conflict" description="In Ref. 1; CAA35761." evidence="14" ref="1">
    <original>L</original>
    <variation>F</variation>
    <location>
        <position position="1654"/>
    </location>
</feature>
<feature type="sequence conflict" description="In Ref. 1; CAA35761." evidence="14" ref="1">
    <original>S</original>
    <variation>C</variation>
    <location>
        <position position="1688"/>
    </location>
</feature>
<feature type="sequence conflict" description="In Ref. 1; CAA35761." evidence="14" ref="1">
    <original>GG</original>
    <variation>VR</variation>
    <location>
        <begin position="1898"/>
        <end position="1899"/>
    </location>
</feature>
<feature type="sequence conflict" description="In Ref. 1; CAA35761." evidence="14" ref="1">
    <original>I</original>
    <variation>T</variation>
    <location>
        <position position="1926"/>
    </location>
</feature>
<feature type="sequence conflict" description="In Ref. 1; CAA35761." evidence="14" ref="1">
    <original>L</original>
    <variation>V</variation>
    <location>
        <position position="2231"/>
    </location>
</feature>
<feature type="sequence conflict" description="In Ref. 1; CAA35761." evidence="14" ref="1">
    <original>A</original>
    <variation>T</variation>
    <location>
        <position position="2333"/>
    </location>
</feature>
<protein>
    <recommendedName>
        <fullName>Microtubule-associated protein 1B</fullName>
        <shortName>MAP-1B</shortName>
    </recommendedName>
    <alternativeName>
        <fullName>MAP1(X)</fullName>
    </alternativeName>
    <alternativeName>
        <fullName>MAP1.2</fullName>
    </alternativeName>
    <component>
        <recommendedName>
            <fullName>MAP1B heavy chain</fullName>
        </recommendedName>
    </component>
    <component>
        <recommendedName>
            <fullName>MAP1 light chain LC1</fullName>
        </recommendedName>
    </component>
</protein>
<comment type="function">
    <text evidence="1 9 11 13">Required for proper microtubule dynamics. Plays a role in the cytoskeletal changes that accompany neuronal differentiation and neurite extension (PubMed:33268592). Possibly MAP1B binds to at least two tubulin subunits in the polymer, and this bridging of subunits might be involved in nucleating microtubule polymerization and in stabilizing microtubules. Acts as a positive cofactor in DAPK1-mediated autophagic vesicle formation and membrane blebbing (By similarity). Facilitates tyrosination of alpha-tubulin in neuronal microtubules. Required for synaptic maturation.</text>
</comment>
<comment type="subunit">
    <text evidence="3 5 6 7 9">3 different light chains, LC1 (a cleavage product of MAP1B), LC2 (a cleavage product of MAP1A) and LC3 (produced by one of the MAP1LC3 genes), can associate with the MAP1A or MAP1B heavy chains. LC1 interacts with the amino-terminal region of MAP1B. Interacts with ANP32A and TIAM2 (PubMed:12807913, PubMed:17320046). Interacts with the tubulin tyrosine TTL (PubMed:18075266). Interacts (via C-terminus) with GAN (via Kelch domains) (PubMed:12147674). Interacts (via N-terminus) with DAPK1 (By similarity). Interacts with TMEM185A (By similarity). Interacts with MAP1LC3B (By similarity). Interacts with KIRREL3 (By similarity).</text>
</comment>
<comment type="subunit">
    <molecule>MAP1 light chain LC1</molecule>
    <text evidence="10">Interacts (via C-terminus) with ELAVL4; the interaction contributes to the association of ELAVL4 with microtubules. Interacts with ELAVL2 and ELAVL3.</text>
</comment>
<comment type="interaction">
    <interactant intactId="EBI-764653">
        <id>P14873</id>
    </interactant>
    <interactant intactId="EBI-2027055">
        <id>Q61166</id>
        <label>Mapre1</label>
    </interactant>
    <organismsDiffer>false</organismsDiffer>
    <experiments>5</experiments>
</comment>
<comment type="interaction">
    <interactant intactId="EBI-764653">
        <id>P14873</id>
    </interactant>
    <interactant intactId="EBI-6396042">
        <id>Q9WTU3</id>
        <label>Scn8a</label>
    </interactant>
    <organismsDiffer>false</organismsDiffer>
    <experiments>7</experiments>
</comment>
<comment type="interaction">
    <interactant intactId="EBI-764653">
        <id>P14873</id>
    </interactant>
    <interactant intactId="EBI-726739">
        <id>Q9UPY8</id>
        <label>MAPRE3</label>
    </interactant>
    <organismsDiffer>true</organismsDiffer>
    <experiments>4</experiments>
</comment>
<comment type="subcellular location">
    <subcellularLocation>
        <location evidence="15">Cytoplasm</location>
        <location evidence="15">Cytoskeleton</location>
    </subcellularLocation>
    <subcellularLocation>
        <location evidence="1">Cytoplasm</location>
    </subcellularLocation>
    <subcellularLocation>
        <location evidence="11">Synapse</location>
    </subcellularLocation>
    <subcellularLocation>
        <location evidence="11">Cell projection</location>
        <location evidence="11">Dendritic spine</location>
    </subcellularLocation>
    <text evidence="1">Colocalizes with DAPK1 in the microtubules and cortical actin fibers.</text>
</comment>
<comment type="subcellular location">
    <molecule>MAP1 light chain LC1</molecule>
    <subcellularLocation>
        <location evidence="10">Cytoplasm</location>
    </subcellularLocation>
</comment>
<comment type="tissue specificity">
    <text evidence="13">Highly expressed in brain and cochlea, mildly expressed in heart, and very weakly expressed in liver and muscle. In the cochlea, it is abundantly expressed in spiral ganglions.</text>
</comment>
<comment type="domain">
    <text evidence="12">Has a highly basic region with many copies of the sequence KKEE and KKEI/V, repeated but not at fixed intervals, which is responsible for the binding of MAP1B to microtubules.</text>
</comment>
<comment type="PTM">
    <text>LC1 is coexpressed with MAP1B. It is a polypeptide generated from MAP1B by proteolytic processing. It is free to associate with both MAP1A and MAP1B. It interacts with the N-terminal region of MAP1B.</text>
</comment>
<comment type="PTM">
    <text evidence="8">S-nitrosylation at Cys-2460 enhances interaction with microtubules, and may act as an effector modification for neuronal nitric oxide synthase control of growth-cone size, growth-cone collapse and axon retraction.</text>
</comment>
<comment type="similarity">
    <text evidence="14">Belongs to the MAP1 family.</text>
</comment>
<keyword id="KW-0007">Acetylation</keyword>
<keyword id="KW-0966">Cell projection</keyword>
<keyword id="KW-0963">Cytoplasm</keyword>
<keyword id="KW-0206">Cytoskeleton</keyword>
<keyword id="KW-0488">Methylation</keyword>
<keyword id="KW-0493">Microtubule</keyword>
<keyword id="KW-0597">Phosphoprotein</keyword>
<keyword id="KW-1185">Reference proteome</keyword>
<keyword id="KW-0677">Repeat</keyword>
<keyword id="KW-0702">S-nitrosylation</keyword>
<keyword id="KW-0770">Synapse</keyword>